<geneLocation type="chloroplast"/>
<sequence length="227" mass="25481">MSLIEFPLLDQTSSNSVISTTPNDLSNWSRLSSLWPLLYGTSCCFIEFASLIGSRFDFDRYGLVPRSSPRQADLILTAGTVTMKMAPSLVRLYEQMPEPKYVIAMGACTITGGMFSTDSYSTVRGVDKLIPVDVYLPGCPPKPEAVIDALTKLRKKIAREIIEDRTLCQSQKKNRSFTTRHKLYVRRSTHTGTYEQELLYQSPSTLDISSETFFKSKSSVSSYKLVN</sequence>
<proteinExistence type="inferred from homology"/>
<keyword id="KW-0004">4Fe-4S</keyword>
<keyword id="KW-0150">Chloroplast</keyword>
<keyword id="KW-0408">Iron</keyword>
<keyword id="KW-0411">Iron-sulfur</keyword>
<keyword id="KW-0472">Membrane</keyword>
<keyword id="KW-0479">Metal-binding</keyword>
<keyword id="KW-0520">NAD</keyword>
<keyword id="KW-0521">NADP</keyword>
<keyword id="KW-0934">Plastid</keyword>
<keyword id="KW-0618">Plastoquinone</keyword>
<keyword id="KW-0874">Quinone</keyword>
<keyword id="KW-0793">Thylakoid</keyword>
<keyword id="KW-1278">Translocase</keyword>
<keyword id="KW-0813">Transport</keyword>
<feature type="chain" id="PRO_0000226918" description="NAD(P)H-quinone oxidoreductase subunit K, chloroplastic">
    <location>
        <begin position="1"/>
        <end position="227"/>
    </location>
</feature>
<feature type="binding site" evidence="1">
    <location>
        <position position="43"/>
    </location>
    <ligand>
        <name>[4Fe-4S] cluster</name>
        <dbReference type="ChEBI" id="CHEBI:49883"/>
    </ligand>
</feature>
<feature type="binding site" evidence="1">
    <location>
        <position position="44"/>
    </location>
    <ligand>
        <name>[4Fe-4S] cluster</name>
        <dbReference type="ChEBI" id="CHEBI:49883"/>
    </ligand>
</feature>
<feature type="binding site" evidence="1">
    <location>
        <position position="108"/>
    </location>
    <ligand>
        <name>[4Fe-4S] cluster</name>
        <dbReference type="ChEBI" id="CHEBI:49883"/>
    </ligand>
</feature>
<feature type="binding site" evidence="1">
    <location>
        <position position="139"/>
    </location>
    <ligand>
        <name>[4Fe-4S] cluster</name>
        <dbReference type="ChEBI" id="CHEBI:49883"/>
    </ligand>
</feature>
<evidence type="ECO:0000255" key="1">
    <source>
        <dbReference type="HAMAP-Rule" id="MF_01356"/>
    </source>
</evidence>
<evidence type="ECO:0000305" key="2"/>
<comment type="function">
    <text evidence="1">NDH shuttles electrons from NAD(P)H:plastoquinone, via FMN and iron-sulfur (Fe-S) centers, to quinones in the photosynthetic chain and possibly in a chloroplast respiratory chain. The immediate electron acceptor for the enzyme in this species is believed to be plastoquinone. Couples the redox reaction to proton translocation, and thus conserves the redox energy in a proton gradient.</text>
</comment>
<comment type="catalytic activity">
    <reaction evidence="1">
        <text>a plastoquinone + NADH + (n+1) H(+)(in) = a plastoquinol + NAD(+) + n H(+)(out)</text>
        <dbReference type="Rhea" id="RHEA:42608"/>
        <dbReference type="Rhea" id="RHEA-COMP:9561"/>
        <dbReference type="Rhea" id="RHEA-COMP:9562"/>
        <dbReference type="ChEBI" id="CHEBI:15378"/>
        <dbReference type="ChEBI" id="CHEBI:17757"/>
        <dbReference type="ChEBI" id="CHEBI:57540"/>
        <dbReference type="ChEBI" id="CHEBI:57945"/>
        <dbReference type="ChEBI" id="CHEBI:62192"/>
    </reaction>
</comment>
<comment type="catalytic activity">
    <reaction evidence="1">
        <text>a plastoquinone + NADPH + (n+1) H(+)(in) = a plastoquinol + NADP(+) + n H(+)(out)</text>
        <dbReference type="Rhea" id="RHEA:42612"/>
        <dbReference type="Rhea" id="RHEA-COMP:9561"/>
        <dbReference type="Rhea" id="RHEA-COMP:9562"/>
        <dbReference type="ChEBI" id="CHEBI:15378"/>
        <dbReference type="ChEBI" id="CHEBI:17757"/>
        <dbReference type="ChEBI" id="CHEBI:57783"/>
        <dbReference type="ChEBI" id="CHEBI:58349"/>
        <dbReference type="ChEBI" id="CHEBI:62192"/>
    </reaction>
</comment>
<comment type="cofactor">
    <cofactor evidence="1">
        <name>[4Fe-4S] cluster</name>
        <dbReference type="ChEBI" id="CHEBI:49883"/>
    </cofactor>
    <text evidence="1">Binds 1 [4Fe-4S] cluster.</text>
</comment>
<comment type="subunit">
    <text evidence="1">NDH is composed of at least 16 different subunits, 5 of which are encoded in the nucleus.</text>
</comment>
<comment type="subcellular location">
    <subcellularLocation>
        <location evidence="1">Plastid</location>
        <location evidence="1">Chloroplast thylakoid membrane</location>
        <topology evidence="1">Peripheral membrane protein</topology>
        <orientation evidence="1">Stromal side</orientation>
    </subcellularLocation>
</comment>
<comment type="similarity">
    <text evidence="1">Belongs to the complex I 20 kDa subunit family.</text>
</comment>
<comment type="sequence caution" evidence="2">
    <conflict type="erroneous initiation">
        <sequence resource="EMBL-CDS" id="AAT44697"/>
    </conflict>
</comment>
<accession>Q6L395</accession>
<name>NDHK_SACHY</name>
<dbReference type="EC" id="7.1.1.-" evidence="1"/>
<dbReference type="EMBL" id="AE009947">
    <property type="protein sequence ID" value="AAT44697.1"/>
    <property type="status" value="ALT_INIT"/>
    <property type="molecule type" value="Genomic_DNA"/>
</dbReference>
<dbReference type="SMR" id="Q6L395"/>
<dbReference type="GO" id="GO:0009535">
    <property type="term" value="C:chloroplast thylakoid membrane"/>
    <property type="evidence" value="ECO:0007669"/>
    <property type="project" value="UniProtKB-SubCell"/>
</dbReference>
<dbReference type="GO" id="GO:0045271">
    <property type="term" value="C:respiratory chain complex I"/>
    <property type="evidence" value="ECO:0007669"/>
    <property type="project" value="TreeGrafter"/>
</dbReference>
<dbReference type="GO" id="GO:0051539">
    <property type="term" value="F:4 iron, 4 sulfur cluster binding"/>
    <property type="evidence" value="ECO:0007669"/>
    <property type="project" value="UniProtKB-KW"/>
</dbReference>
<dbReference type="GO" id="GO:0005506">
    <property type="term" value="F:iron ion binding"/>
    <property type="evidence" value="ECO:0007669"/>
    <property type="project" value="UniProtKB-UniRule"/>
</dbReference>
<dbReference type="GO" id="GO:0008137">
    <property type="term" value="F:NADH dehydrogenase (ubiquinone) activity"/>
    <property type="evidence" value="ECO:0007669"/>
    <property type="project" value="InterPro"/>
</dbReference>
<dbReference type="GO" id="GO:0048038">
    <property type="term" value="F:quinone binding"/>
    <property type="evidence" value="ECO:0007669"/>
    <property type="project" value="UniProtKB-KW"/>
</dbReference>
<dbReference type="GO" id="GO:0009060">
    <property type="term" value="P:aerobic respiration"/>
    <property type="evidence" value="ECO:0007669"/>
    <property type="project" value="TreeGrafter"/>
</dbReference>
<dbReference type="GO" id="GO:0015990">
    <property type="term" value="P:electron transport coupled proton transport"/>
    <property type="evidence" value="ECO:0007669"/>
    <property type="project" value="TreeGrafter"/>
</dbReference>
<dbReference type="GO" id="GO:0019684">
    <property type="term" value="P:photosynthesis, light reaction"/>
    <property type="evidence" value="ECO:0007669"/>
    <property type="project" value="UniProtKB-UniRule"/>
</dbReference>
<dbReference type="FunFam" id="3.40.50.12280:FF:000003">
    <property type="entry name" value="NAD(P)H-quinone oxidoreductase subunit K, chloroplastic"/>
    <property type="match status" value="1"/>
</dbReference>
<dbReference type="Gene3D" id="3.40.50.12280">
    <property type="match status" value="1"/>
</dbReference>
<dbReference type="HAMAP" id="MF_01356">
    <property type="entry name" value="NDH1_NuoB"/>
    <property type="match status" value="1"/>
</dbReference>
<dbReference type="InterPro" id="IPR006137">
    <property type="entry name" value="NADH_UbQ_OxRdtase-like_20kDa"/>
</dbReference>
<dbReference type="InterPro" id="IPR006138">
    <property type="entry name" value="NADH_UQ_OxRdtase_20Kd_su"/>
</dbReference>
<dbReference type="NCBIfam" id="TIGR01957">
    <property type="entry name" value="nuoB_fam"/>
    <property type="match status" value="1"/>
</dbReference>
<dbReference type="NCBIfam" id="NF005012">
    <property type="entry name" value="PRK06411.1"/>
    <property type="match status" value="1"/>
</dbReference>
<dbReference type="PANTHER" id="PTHR11995">
    <property type="entry name" value="NADH DEHYDROGENASE"/>
    <property type="match status" value="1"/>
</dbReference>
<dbReference type="PANTHER" id="PTHR11995:SF14">
    <property type="entry name" value="NADH DEHYDROGENASE [UBIQUINONE] IRON-SULFUR PROTEIN 7, MITOCHONDRIAL"/>
    <property type="match status" value="1"/>
</dbReference>
<dbReference type="Pfam" id="PF01058">
    <property type="entry name" value="Oxidored_q6"/>
    <property type="match status" value="1"/>
</dbReference>
<dbReference type="SUPFAM" id="SSF56770">
    <property type="entry name" value="HydA/Nqo6-like"/>
    <property type="match status" value="1"/>
</dbReference>
<dbReference type="PROSITE" id="PS01150">
    <property type="entry name" value="COMPLEX1_20K"/>
    <property type="match status" value="1"/>
</dbReference>
<protein>
    <recommendedName>
        <fullName evidence="1">NAD(P)H-quinone oxidoreductase subunit K, chloroplastic</fullName>
        <ecNumber evidence="1">7.1.1.-</ecNumber>
    </recommendedName>
    <alternativeName>
        <fullName evidence="1">NAD(P)H dehydrogenase subunit K</fullName>
    </alternativeName>
    <alternativeName>
        <fullName evidence="1">NADH-plastoquinone oxidoreductase subunit K</fullName>
    </alternativeName>
</protein>
<gene>
    <name evidence="1" type="primary">ndhK</name>
    <name type="ordered locus">PS125</name>
</gene>
<organism>
    <name type="scientific">Saccharum hybrid</name>
    <name type="common">Sugarcane</name>
    <dbReference type="NCBI Taxonomy" id="15819"/>
    <lineage>
        <taxon>Eukaryota</taxon>
        <taxon>Viridiplantae</taxon>
        <taxon>Streptophyta</taxon>
        <taxon>Embryophyta</taxon>
        <taxon>Tracheophyta</taxon>
        <taxon>Spermatophyta</taxon>
        <taxon>Magnoliopsida</taxon>
        <taxon>Liliopsida</taxon>
        <taxon>Poales</taxon>
        <taxon>Poaceae</taxon>
        <taxon>PACMAD clade</taxon>
        <taxon>Panicoideae</taxon>
        <taxon>Andropogonodae</taxon>
        <taxon>Andropogoneae</taxon>
        <taxon>Saccharinae</taxon>
        <taxon>Saccharum</taxon>
    </lineage>
</organism>
<reference key="1">
    <citation type="journal article" date="2004" name="Curr. Genet.">
        <title>Structural features and transcript-editing analysis of sugarcane (Saccharum officinarum L.) chloroplast genome.</title>
        <authorList>
            <person name="Calsa T. Jr."/>
            <person name="Carraro D.M."/>
            <person name="Benatti M.R."/>
            <person name="Barbosa A.C."/>
            <person name="Kitajima J.P."/>
            <person name="Carrer H."/>
        </authorList>
    </citation>
    <scope>NUCLEOTIDE SEQUENCE [LARGE SCALE GENOMIC DNA]</scope>
    <source>
        <strain>cv. SP-80-3280</strain>
    </source>
</reference>